<dbReference type="EC" id="2.1.3.3" evidence="2"/>
<dbReference type="EMBL" id="CP000323">
    <property type="protein sequence ID" value="ABE75240.1"/>
    <property type="molecule type" value="Genomic_DNA"/>
</dbReference>
<dbReference type="RefSeq" id="WP_011513792.1">
    <property type="nucleotide sequence ID" value="NC_007969.1"/>
</dbReference>
<dbReference type="SMR" id="Q1QAR3"/>
<dbReference type="STRING" id="335284.Pcryo_1461"/>
<dbReference type="KEGG" id="pcr:Pcryo_1461"/>
<dbReference type="eggNOG" id="COG0078">
    <property type="taxonomic scope" value="Bacteria"/>
</dbReference>
<dbReference type="HOGENOM" id="CLU_043846_3_2_6"/>
<dbReference type="UniPathway" id="UPA00068">
    <property type="reaction ID" value="UER00112"/>
</dbReference>
<dbReference type="Proteomes" id="UP000002425">
    <property type="component" value="Chromosome"/>
</dbReference>
<dbReference type="GO" id="GO:0005737">
    <property type="term" value="C:cytoplasm"/>
    <property type="evidence" value="ECO:0007669"/>
    <property type="project" value="UniProtKB-SubCell"/>
</dbReference>
<dbReference type="GO" id="GO:0016597">
    <property type="term" value="F:amino acid binding"/>
    <property type="evidence" value="ECO:0007669"/>
    <property type="project" value="InterPro"/>
</dbReference>
<dbReference type="GO" id="GO:0004585">
    <property type="term" value="F:ornithine carbamoyltransferase activity"/>
    <property type="evidence" value="ECO:0007669"/>
    <property type="project" value="UniProtKB-UniRule"/>
</dbReference>
<dbReference type="GO" id="GO:0042450">
    <property type="term" value="P:arginine biosynthetic process via ornithine"/>
    <property type="evidence" value="ECO:0007669"/>
    <property type="project" value="TreeGrafter"/>
</dbReference>
<dbReference type="GO" id="GO:0019240">
    <property type="term" value="P:citrulline biosynthetic process"/>
    <property type="evidence" value="ECO:0007669"/>
    <property type="project" value="TreeGrafter"/>
</dbReference>
<dbReference type="GO" id="GO:0006526">
    <property type="term" value="P:L-arginine biosynthetic process"/>
    <property type="evidence" value="ECO:0007669"/>
    <property type="project" value="UniProtKB-UniRule"/>
</dbReference>
<dbReference type="FunFam" id="3.40.50.1370:FF:000008">
    <property type="entry name" value="Ornithine carbamoyltransferase"/>
    <property type="match status" value="1"/>
</dbReference>
<dbReference type="Gene3D" id="3.40.50.1370">
    <property type="entry name" value="Aspartate/ornithine carbamoyltransferase"/>
    <property type="match status" value="2"/>
</dbReference>
<dbReference type="HAMAP" id="MF_01109">
    <property type="entry name" value="OTCase"/>
    <property type="match status" value="1"/>
</dbReference>
<dbReference type="InterPro" id="IPR006132">
    <property type="entry name" value="Asp/Orn_carbamoyltranf_P-bd"/>
</dbReference>
<dbReference type="InterPro" id="IPR006130">
    <property type="entry name" value="Asp/Orn_carbamoylTrfase"/>
</dbReference>
<dbReference type="InterPro" id="IPR036901">
    <property type="entry name" value="Asp/Orn_carbamoylTrfase_sf"/>
</dbReference>
<dbReference type="InterPro" id="IPR006131">
    <property type="entry name" value="Asp_carbamoyltransf_Asp/Orn-bd"/>
</dbReference>
<dbReference type="InterPro" id="IPR002292">
    <property type="entry name" value="Orn/put_carbamltrans"/>
</dbReference>
<dbReference type="InterPro" id="IPR024904">
    <property type="entry name" value="OTCase_ArgI"/>
</dbReference>
<dbReference type="NCBIfam" id="TIGR00658">
    <property type="entry name" value="orni_carb_tr"/>
    <property type="match status" value="1"/>
</dbReference>
<dbReference type="NCBIfam" id="NF001986">
    <property type="entry name" value="PRK00779.1"/>
    <property type="match status" value="1"/>
</dbReference>
<dbReference type="PANTHER" id="PTHR45753">
    <property type="entry name" value="ORNITHINE CARBAMOYLTRANSFERASE, MITOCHONDRIAL"/>
    <property type="match status" value="1"/>
</dbReference>
<dbReference type="PANTHER" id="PTHR45753:SF3">
    <property type="entry name" value="ORNITHINE TRANSCARBAMYLASE, MITOCHONDRIAL"/>
    <property type="match status" value="1"/>
</dbReference>
<dbReference type="Pfam" id="PF00185">
    <property type="entry name" value="OTCace"/>
    <property type="match status" value="1"/>
</dbReference>
<dbReference type="Pfam" id="PF02729">
    <property type="entry name" value="OTCace_N"/>
    <property type="match status" value="1"/>
</dbReference>
<dbReference type="PRINTS" id="PR00100">
    <property type="entry name" value="AOTCASE"/>
</dbReference>
<dbReference type="PRINTS" id="PR00102">
    <property type="entry name" value="OTCASE"/>
</dbReference>
<dbReference type="SUPFAM" id="SSF53671">
    <property type="entry name" value="Aspartate/ornithine carbamoyltransferase"/>
    <property type="match status" value="1"/>
</dbReference>
<dbReference type="PROSITE" id="PS00097">
    <property type="entry name" value="CARBAMOYLTRANSFERASE"/>
    <property type="match status" value="1"/>
</dbReference>
<organism>
    <name type="scientific">Psychrobacter cryohalolentis (strain ATCC BAA-1226 / DSM 17306 / VKM B-2378 / K5)</name>
    <dbReference type="NCBI Taxonomy" id="335284"/>
    <lineage>
        <taxon>Bacteria</taxon>
        <taxon>Pseudomonadati</taxon>
        <taxon>Pseudomonadota</taxon>
        <taxon>Gammaproteobacteria</taxon>
        <taxon>Moraxellales</taxon>
        <taxon>Moraxellaceae</taxon>
        <taxon>Psychrobacter</taxon>
    </lineage>
</organism>
<comment type="function">
    <text evidence="1">Reversibly catalyzes the transfer of the carbamoyl group from carbamoyl phosphate (CP) to the N(epsilon) atom of ornithine (ORN) to produce L-citrulline.</text>
</comment>
<comment type="catalytic activity">
    <reaction evidence="2">
        <text>carbamoyl phosphate + L-ornithine = L-citrulline + phosphate + H(+)</text>
        <dbReference type="Rhea" id="RHEA:19513"/>
        <dbReference type="ChEBI" id="CHEBI:15378"/>
        <dbReference type="ChEBI" id="CHEBI:43474"/>
        <dbReference type="ChEBI" id="CHEBI:46911"/>
        <dbReference type="ChEBI" id="CHEBI:57743"/>
        <dbReference type="ChEBI" id="CHEBI:58228"/>
        <dbReference type="EC" id="2.1.3.3"/>
    </reaction>
</comment>
<comment type="pathway">
    <text evidence="2">Amino-acid biosynthesis; L-arginine biosynthesis; L-arginine from L-ornithine and carbamoyl phosphate: step 1/3.</text>
</comment>
<comment type="subcellular location">
    <subcellularLocation>
        <location evidence="2">Cytoplasm</location>
    </subcellularLocation>
</comment>
<comment type="similarity">
    <text evidence="2">Belongs to the aspartate/ornithine carbamoyltransferase superfamily. OTCase family.</text>
</comment>
<keyword id="KW-0028">Amino-acid biosynthesis</keyword>
<keyword id="KW-0055">Arginine biosynthesis</keyword>
<keyword id="KW-0963">Cytoplasm</keyword>
<keyword id="KW-0808">Transferase</keyword>
<feature type="chain" id="PRO_1000065112" description="Ornithine carbamoyltransferase">
    <location>
        <begin position="1"/>
        <end position="305"/>
    </location>
</feature>
<feature type="binding site" evidence="2">
    <location>
        <begin position="53"/>
        <end position="56"/>
    </location>
    <ligand>
        <name>carbamoyl phosphate</name>
        <dbReference type="ChEBI" id="CHEBI:58228"/>
    </ligand>
</feature>
<feature type="binding site" evidence="2">
    <location>
        <position position="80"/>
    </location>
    <ligand>
        <name>carbamoyl phosphate</name>
        <dbReference type="ChEBI" id="CHEBI:58228"/>
    </ligand>
</feature>
<feature type="binding site" evidence="2">
    <location>
        <position position="104"/>
    </location>
    <ligand>
        <name>carbamoyl phosphate</name>
        <dbReference type="ChEBI" id="CHEBI:58228"/>
    </ligand>
</feature>
<feature type="binding site" evidence="2">
    <location>
        <begin position="131"/>
        <end position="134"/>
    </location>
    <ligand>
        <name>carbamoyl phosphate</name>
        <dbReference type="ChEBI" id="CHEBI:58228"/>
    </ligand>
</feature>
<feature type="binding site" evidence="2">
    <location>
        <position position="162"/>
    </location>
    <ligand>
        <name>L-ornithine</name>
        <dbReference type="ChEBI" id="CHEBI:46911"/>
    </ligand>
</feature>
<feature type="binding site" evidence="2">
    <location>
        <position position="219"/>
    </location>
    <ligand>
        <name>L-ornithine</name>
        <dbReference type="ChEBI" id="CHEBI:46911"/>
    </ligand>
</feature>
<feature type="binding site" evidence="2">
    <location>
        <begin position="223"/>
        <end position="224"/>
    </location>
    <ligand>
        <name>L-ornithine</name>
        <dbReference type="ChEBI" id="CHEBI:46911"/>
    </ligand>
</feature>
<feature type="binding site" evidence="2">
    <location>
        <begin position="259"/>
        <end position="260"/>
    </location>
    <ligand>
        <name>carbamoyl phosphate</name>
        <dbReference type="ChEBI" id="CHEBI:58228"/>
    </ligand>
</feature>
<feature type="binding site" evidence="2">
    <location>
        <position position="287"/>
    </location>
    <ligand>
        <name>carbamoyl phosphate</name>
        <dbReference type="ChEBI" id="CHEBI:58228"/>
    </ligand>
</feature>
<sequence length="305" mass="34656">MSLRHFLTLSDLTKQELENLIKRASELRHMQHAGEIYQPFVGRTLGMIFEKSSTRTRISFETGMGQFGGSAIFLSPNDTQLGRGEPIEDSARVISSMVDIIMIRTFGHEKVETFAKYSSVPIINALTDEFHPCQLLADMQTYYEHRGSIENKIVTWVGDGNNMCASYMQAANQFGFELRVAAPYGFEPDPELMKRFSHCVSIVENVQEAAKDSHLIVTDVWASMGQESEQNTRARRFSSYQVTPSLLDKADSEVVFMHCLPAHRGEEISHDMLDDPRSVVWDEAENRLHAQKALMEFLLKDKIKI</sequence>
<evidence type="ECO:0000250" key="1"/>
<evidence type="ECO:0000255" key="2">
    <source>
        <dbReference type="HAMAP-Rule" id="MF_01109"/>
    </source>
</evidence>
<name>OTC_PSYCK</name>
<accession>Q1QAR3</accession>
<gene>
    <name evidence="2" type="primary">argF</name>
    <name type="ordered locus">Pcryo_1461</name>
</gene>
<reference key="1">
    <citation type="submission" date="2006-03" db="EMBL/GenBank/DDBJ databases">
        <title>Complete sequence of chromosome of Psychrobacter cryohalolentis K5.</title>
        <authorList>
            <consortium name="US DOE Joint Genome Institute"/>
            <person name="Copeland A."/>
            <person name="Lucas S."/>
            <person name="Lapidus A."/>
            <person name="Barry K."/>
            <person name="Detter J.C."/>
            <person name="Glavina T."/>
            <person name="Hammon N."/>
            <person name="Israni S."/>
            <person name="Dalin E."/>
            <person name="Tice H."/>
            <person name="Pitluck S."/>
            <person name="Brettin T."/>
            <person name="Bruce D."/>
            <person name="Han C."/>
            <person name="Tapia R."/>
            <person name="Sims D.R."/>
            <person name="Gilna P."/>
            <person name="Schmutz J."/>
            <person name="Larimer F."/>
            <person name="Land M."/>
            <person name="Hauser L."/>
            <person name="Kyrpides N."/>
            <person name="Kim E."/>
            <person name="Richardson P."/>
        </authorList>
    </citation>
    <scope>NUCLEOTIDE SEQUENCE [LARGE SCALE GENOMIC DNA]</scope>
    <source>
        <strain>ATCC BAA-1226 / DSM 17306 / VKM B-2378 / K5</strain>
    </source>
</reference>
<protein>
    <recommendedName>
        <fullName evidence="2">Ornithine carbamoyltransferase</fullName>
        <shortName evidence="2">OTCase</shortName>
        <ecNumber evidence="2">2.1.3.3</ecNumber>
    </recommendedName>
</protein>
<proteinExistence type="inferred from homology"/>